<organism>
    <name type="scientific">Homo sapiens</name>
    <name type="common">Human</name>
    <dbReference type="NCBI Taxonomy" id="9606"/>
    <lineage>
        <taxon>Eukaryota</taxon>
        <taxon>Metazoa</taxon>
        <taxon>Chordata</taxon>
        <taxon>Craniata</taxon>
        <taxon>Vertebrata</taxon>
        <taxon>Euteleostomi</taxon>
        <taxon>Mammalia</taxon>
        <taxon>Eutheria</taxon>
        <taxon>Euarchontoglires</taxon>
        <taxon>Primates</taxon>
        <taxon>Haplorrhini</taxon>
        <taxon>Catarrhini</taxon>
        <taxon>Hominidae</taxon>
        <taxon>Homo</taxon>
    </lineage>
</organism>
<feature type="signal peptide" evidence="1">
    <location>
        <begin position="1"/>
        <end position="21"/>
    </location>
</feature>
<feature type="chain" id="PRO_0000011944" description="Acidic mammalian chitinase">
    <location>
        <begin position="22"/>
        <end position="476"/>
    </location>
</feature>
<feature type="domain" description="GH18" evidence="3">
    <location>
        <begin position="22"/>
        <end position="390"/>
    </location>
</feature>
<feature type="domain" description="Chitin-binding type-2" evidence="2">
    <location>
        <begin position="427"/>
        <end position="476"/>
    </location>
</feature>
<feature type="active site" description="Proton donor" evidence="3">
    <location>
        <position position="140"/>
    </location>
</feature>
<feature type="binding site" evidence="3">
    <location>
        <begin position="70"/>
        <end position="71"/>
    </location>
    <ligand>
        <name>chitin</name>
        <dbReference type="ChEBI" id="CHEBI:17029"/>
    </ligand>
</feature>
<feature type="binding site" evidence="3">
    <location>
        <begin position="97"/>
        <end position="100"/>
    </location>
    <ligand>
        <name>chitin</name>
        <dbReference type="ChEBI" id="CHEBI:17029"/>
    </ligand>
</feature>
<feature type="binding site" evidence="3">
    <location>
        <position position="141"/>
    </location>
    <ligand>
        <name>chitin</name>
        <dbReference type="ChEBI" id="CHEBI:17029"/>
    </ligand>
</feature>
<feature type="binding site" evidence="3">
    <location>
        <begin position="210"/>
        <end position="213"/>
    </location>
    <ligand>
        <name>chitin</name>
        <dbReference type="ChEBI" id="CHEBI:17029"/>
    </ligand>
</feature>
<feature type="binding site" evidence="3">
    <location>
        <position position="360"/>
    </location>
    <ligand>
        <name>chitin</name>
        <dbReference type="ChEBI" id="CHEBI:17029"/>
    </ligand>
</feature>
<feature type="disulfide bond" evidence="3 8">
    <location>
        <begin position="26"/>
        <end position="51"/>
    </location>
</feature>
<feature type="disulfide bond" evidence="2 8">
    <location>
        <begin position="49"/>
        <end position="394"/>
    </location>
</feature>
<feature type="disulfide bond" evidence="2 8">
    <location>
        <begin position="307"/>
        <end position="372"/>
    </location>
</feature>
<feature type="splice variant" id="VSP_008634" description="In isoform 3." evidence="11 13">
    <location>
        <begin position="1"/>
        <end position="161"/>
    </location>
</feature>
<feature type="splice variant" id="VSP_008635" description="In isoform 2." evidence="11 12 13">
    <location>
        <begin position="1"/>
        <end position="108"/>
    </location>
</feature>
<feature type="sequence variant" id="VAR_063030" description="Increased chitinase activity; when associated with N-47 and M-61; dbSNP:rs41282492." evidence="10">
    <original>N</original>
    <variation>D</variation>
    <location>
        <position position="45"/>
    </location>
</feature>
<feature type="sequence variant" id="VAR_063031" description="Increased chitinase activity; when associated with D-45 and M-61; dbSNP:rs41282494." evidence="10">
    <original>D</original>
    <variation>N</variation>
    <location>
        <position position="47"/>
    </location>
</feature>
<feature type="sequence variant" id="VAR_063032" description="Increased chitinase activity; when associated with D-45 and N-47; dbSNP:rs41282496." evidence="10">
    <original>R</original>
    <variation>M</variation>
    <location>
        <position position="61"/>
    </location>
</feature>
<feature type="sequence variant" id="VAR_049192" description="In dbSNP:rs3818822." evidence="10">
    <original>G</original>
    <variation>R</variation>
    <location>
        <position position="102"/>
    </location>
</feature>
<feature type="sequence variant" id="VAR_063033" description="In dbSNP:rs61756687." evidence="10">
    <original>K</original>
    <variation>R</variation>
    <location>
        <position position="125"/>
    </location>
</feature>
<feature type="sequence variant" id="VAR_033730" description="In dbSNP:rs2256721.">
    <original>V</original>
    <variation>G</variation>
    <location>
        <position position="324"/>
    </location>
</feature>
<feature type="sequence variant" id="VAR_049193" description="In dbSNP:rs2275253." evidence="4 10">
    <original>I</original>
    <variation>V</variation>
    <location>
        <position position="339"/>
    </location>
</feature>
<feature type="sequence variant" id="VAR_049194" description="In dbSNP:rs2275254." evidence="10">
    <original>F</original>
    <variation>S</variation>
    <location>
        <position position="354"/>
    </location>
</feature>
<feature type="sequence variant" id="VAR_049195" description="In dbSNP:rs36011905.">
    <original>F</original>
    <variation>L</variation>
    <location>
        <position position="377"/>
    </location>
</feature>
<feature type="sequence variant" id="VAR_049196" description="In dbSNP:rs2256721." evidence="4 10">
    <original>V</original>
    <variation>G</variation>
    <location>
        <position position="432"/>
    </location>
</feature>
<feature type="mutagenesis site" description="Loss of chitinase activity. No effect on protection against apoptosis or on AKT1 activation." evidence="9">
    <original>D</original>
    <variation>A</variation>
    <location>
        <position position="138"/>
    </location>
</feature>
<feature type="sequence conflict" description="In Ref. 3; AAX81431." evidence="14" ref="3">
    <original>Y</original>
    <variation>C</variation>
    <location>
        <position position="203"/>
    </location>
</feature>
<feature type="strand" evidence="16">
    <location>
        <begin position="23"/>
        <end position="29"/>
    </location>
</feature>
<feature type="helix" evidence="16">
    <location>
        <begin position="32"/>
        <end position="34"/>
    </location>
</feature>
<feature type="helix" evidence="16">
    <location>
        <begin position="37"/>
        <end position="39"/>
    </location>
</feature>
<feature type="helix" evidence="16">
    <location>
        <begin position="43"/>
        <end position="45"/>
    </location>
</feature>
<feature type="turn" evidence="17">
    <location>
        <begin position="48"/>
        <end position="50"/>
    </location>
</feature>
<feature type="strand" evidence="16">
    <location>
        <begin position="52"/>
        <end position="62"/>
    </location>
</feature>
<feature type="strand" evidence="16">
    <location>
        <begin position="65"/>
        <end position="67"/>
    </location>
</feature>
<feature type="helix" evidence="16">
    <location>
        <begin position="73"/>
        <end position="82"/>
    </location>
</feature>
<feature type="helix" evidence="16">
    <location>
        <begin position="83"/>
        <end position="85"/>
    </location>
</feature>
<feature type="strand" evidence="16">
    <location>
        <begin position="91"/>
        <end position="97"/>
    </location>
</feature>
<feature type="helix" evidence="16">
    <location>
        <begin position="99"/>
        <end position="101"/>
    </location>
</feature>
<feature type="helix" evidence="16">
    <location>
        <begin position="104"/>
        <end position="110"/>
    </location>
</feature>
<feature type="helix" evidence="16">
    <location>
        <begin position="113"/>
        <end position="130"/>
    </location>
</feature>
<feature type="strand" evidence="16">
    <location>
        <begin position="133"/>
        <end position="138"/>
    </location>
</feature>
<feature type="helix" evidence="16">
    <location>
        <begin position="151"/>
        <end position="173"/>
    </location>
</feature>
<feature type="strand" evidence="16">
    <location>
        <begin position="179"/>
        <end position="184"/>
    </location>
</feature>
<feature type="helix" evidence="16">
    <location>
        <begin position="188"/>
        <end position="194"/>
    </location>
</feature>
<feature type="helix" evidence="16">
    <location>
        <begin position="197"/>
        <end position="203"/>
    </location>
</feature>
<feature type="strand" evidence="16">
    <location>
        <begin position="205"/>
        <end position="209"/>
    </location>
</feature>
<feature type="helix" evidence="16">
    <location>
        <begin position="217"/>
        <end position="219"/>
    </location>
</feature>
<feature type="helix" evidence="16">
    <location>
        <begin position="236"/>
        <end position="240"/>
    </location>
</feature>
<feature type="helix" evidence="16">
    <location>
        <begin position="243"/>
        <end position="252"/>
    </location>
</feature>
<feature type="helix" evidence="16">
    <location>
        <begin position="257"/>
        <end position="259"/>
    </location>
</feature>
<feature type="strand" evidence="16">
    <location>
        <begin position="260"/>
        <end position="275"/>
    </location>
</feature>
<feature type="strand" evidence="16">
    <location>
        <begin position="284"/>
        <end position="288"/>
    </location>
</feature>
<feature type="turn" evidence="16">
    <location>
        <begin position="293"/>
        <end position="295"/>
    </location>
</feature>
<feature type="strand" evidence="16">
    <location>
        <begin position="300"/>
        <end position="302"/>
    </location>
</feature>
<feature type="helix" evidence="16">
    <location>
        <begin position="303"/>
        <end position="311"/>
    </location>
</feature>
<feature type="strand" evidence="16">
    <location>
        <begin position="315"/>
        <end position="319"/>
    </location>
</feature>
<feature type="turn" evidence="16">
    <location>
        <begin position="320"/>
        <end position="323"/>
    </location>
</feature>
<feature type="strand" evidence="16">
    <location>
        <begin position="324"/>
        <end position="329"/>
    </location>
</feature>
<feature type="strand" evidence="16">
    <location>
        <begin position="332"/>
        <end position="335"/>
    </location>
</feature>
<feature type="helix" evidence="16">
    <location>
        <begin position="339"/>
        <end position="351"/>
    </location>
</feature>
<feature type="strand" evidence="16">
    <location>
        <begin position="355"/>
        <end position="360"/>
    </location>
</feature>
<feature type="helix" evidence="16">
    <location>
        <begin position="362"/>
        <end position="364"/>
    </location>
</feature>
<feature type="strand" evidence="16">
    <location>
        <begin position="367"/>
        <end position="369"/>
    </location>
</feature>
<feature type="turn" evidence="16">
    <location>
        <begin position="370"/>
        <end position="372"/>
    </location>
</feature>
<feature type="helix" evidence="16">
    <location>
        <begin position="378"/>
        <end position="386"/>
    </location>
</feature>
<feature type="helix" evidence="15">
    <location>
        <begin position="392"/>
        <end position="394"/>
    </location>
</feature>
<evidence type="ECO:0000250" key="1"/>
<evidence type="ECO:0000255" key="2">
    <source>
        <dbReference type="PROSITE-ProRule" id="PRU00144"/>
    </source>
</evidence>
<evidence type="ECO:0000255" key="3">
    <source>
        <dbReference type="PROSITE-ProRule" id="PRU01258"/>
    </source>
</evidence>
<evidence type="ECO:0000269" key="4">
    <source>
    </source>
</evidence>
<evidence type="ECO:0000269" key="5">
    <source>
    </source>
</evidence>
<evidence type="ECO:0000269" key="6">
    <source>
    </source>
</evidence>
<evidence type="ECO:0000269" key="7">
    <source>
    </source>
</evidence>
<evidence type="ECO:0000269" key="8">
    <source>
    </source>
</evidence>
<evidence type="ECO:0000269" key="9">
    <source>
    </source>
</evidence>
<evidence type="ECO:0000269" key="10">
    <source>
    </source>
</evidence>
<evidence type="ECO:0000303" key="11">
    <source>
    </source>
</evidence>
<evidence type="ECO:0000303" key="12">
    <source>
    </source>
</evidence>
<evidence type="ECO:0000303" key="13">
    <source ref="3"/>
</evidence>
<evidence type="ECO:0000305" key="14"/>
<evidence type="ECO:0007829" key="15">
    <source>
        <dbReference type="PDB" id="3FXY"/>
    </source>
</evidence>
<evidence type="ECO:0007829" key="16">
    <source>
        <dbReference type="PDB" id="3FY1"/>
    </source>
</evidence>
<evidence type="ECO:0007829" key="17">
    <source>
        <dbReference type="PDB" id="3RM8"/>
    </source>
</evidence>
<keyword id="KW-0002">3D-structure</keyword>
<keyword id="KW-0025">Alternative splicing</keyword>
<keyword id="KW-0053">Apoptosis</keyword>
<keyword id="KW-0119">Carbohydrate metabolism</keyword>
<keyword id="KW-0146">Chitin degradation</keyword>
<keyword id="KW-0147">Chitin-binding</keyword>
<keyword id="KW-0963">Cytoplasm</keyword>
<keyword id="KW-1015">Disulfide bond</keyword>
<keyword id="KW-0326">Glycosidase</keyword>
<keyword id="KW-0378">Hydrolase</keyword>
<keyword id="KW-0391">Immunity</keyword>
<keyword id="KW-0395">Inflammatory response</keyword>
<keyword id="KW-0624">Polysaccharide degradation</keyword>
<keyword id="KW-1267">Proteomics identification</keyword>
<keyword id="KW-1185">Reference proteome</keyword>
<keyword id="KW-0964">Secreted</keyword>
<keyword id="KW-0732">Signal</keyword>
<protein>
    <recommendedName>
        <fullName>Acidic mammalian chitinase</fullName>
        <shortName>AMCase</shortName>
        <ecNumber>3.2.1.14</ecNumber>
    </recommendedName>
    <alternativeName>
        <fullName>Lung-specific protein TSA1902</fullName>
    </alternativeName>
</protein>
<reference key="1">
    <citation type="journal article" date="1999" name="Gene">
        <title>Isolation and mapping of a human lung-specific gene, TSA1902, encoding a novel chitinase family member.</title>
        <authorList>
            <person name="Saito A."/>
            <person name="Ozaki K."/>
            <person name="Fujiwara T."/>
            <person name="Nakamura Y."/>
            <person name="Tanigami A."/>
        </authorList>
    </citation>
    <scope>NUCLEOTIDE SEQUENCE [MRNA] (ISOFORMS 2 AND 3)</scope>
    <scope>VARIANTS VAL-339 AND GLY-432</scope>
    <source>
        <tissue>Lung</tissue>
    </source>
</reference>
<reference key="2">
    <citation type="journal article" date="2001" name="J. Biol. Chem.">
        <title>Identification of a novel acidic mammalian chitinase distinct from chitotriosidase.</title>
        <authorList>
            <person name="Boot R.G."/>
            <person name="Blommaart E.F.C."/>
            <person name="Swart E."/>
            <person name="Ghauharali-van der Vlugt K."/>
            <person name="Bijl N."/>
            <person name="Moe C."/>
            <person name="Place A."/>
            <person name="Aerts J.M.F.G."/>
        </authorList>
    </citation>
    <scope>NUCLEOTIDE SEQUENCE [MRNA] (ISOFORM 1)</scope>
    <scope>FUNCTION</scope>
    <scope>TISSUE SPECIFICITY</scope>
</reference>
<reference key="3">
    <citation type="submission" date="2004-10" db="EMBL/GenBank/DDBJ databases">
        <title>A novel chitinase family member.</title>
        <authorList>
            <person name="Chen X.H."/>
            <person name="Cai G.P."/>
        </authorList>
    </citation>
    <scope>NUCLEOTIDE SEQUENCE [MRNA] (ISOFORMS 2 AND 3)</scope>
    <source>
        <tissue>Kidney</tissue>
    </source>
</reference>
<reference key="4">
    <citation type="journal article" date="2006" name="Nature">
        <title>The DNA sequence and biological annotation of human chromosome 1.</title>
        <authorList>
            <person name="Gregory S.G."/>
            <person name="Barlow K.F."/>
            <person name="McLay K.E."/>
            <person name="Kaul R."/>
            <person name="Swarbreck D."/>
            <person name="Dunham A."/>
            <person name="Scott C.E."/>
            <person name="Howe K.L."/>
            <person name="Woodfine K."/>
            <person name="Spencer C.C.A."/>
            <person name="Jones M.C."/>
            <person name="Gillson C."/>
            <person name="Searle S."/>
            <person name="Zhou Y."/>
            <person name="Kokocinski F."/>
            <person name="McDonald L."/>
            <person name="Evans R."/>
            <person name="Phillips K."/>
            <person name="Atkinson A."/>
            <person name="Cooper R."/>
            <person name="Jones C."/>
            <person name="Hall R.E."/>
            <person name="Andrews T.D."/>
            <person name="Lloyd C."/>
            <person name="Ainscough R."/>
            <person name="Almeida J.P."/>
            <person name="Ambrose K.D."/>
            <person name="Anderson F."/>
            <person name="Andrew R.W."/>
            <person name="Ashwell R.I.S."/>
            <person name="Aubin K."/>
            <person name="Babbage A.K."/>
            <person name="Bagguley C.L."/>
            <person name="Bailey J."/>
            <person name="Beasley H."/>
            <person name="Bethel G."/>
            <person name="Bird C.P."/>
            <person name="Bray-Allen S."/>
            <person name="Brown J.Y."/>
            <person name="Brown A.J."/>
            <person name="Buckley D."/>
            <person name="Burton J."/>
            <person name="Bye J."/>
            <person name="Carder C."/>
            <person name="Chapman J.C."/>
            <person name="Clark S.Y."/>
            <person name="Clarke G."/>
            <person name="Clee C."/>
            <person name="Cobley V."/>
            <person name="Collier R.E."/>
            <person name="Corby N."/>
            <person name="Coville G.J."/>
            <person name="Davies J."/>
            <person name="Deadman R."/>
            <person name="Dunn M."/>
            <person name="Earthrowl M."/>
            <person name="Ellington A.G."/>
            <person name="Errington H."/>
            <person name="Frankish A."/>
            <person name="Frankland J."/>
            <person name="French L."/>
            <person name="Garner P."/>
            <person name="Garnett J."/>
            <person name="Gay L."/>
            <person name="Ghori M.R.J."/>
            <person name="Gibson R."/>
            <person name="Gilby L.M."/>
            <person name="Gillett W."/>
            <person name="Glithero R.J."/>
            <person name="Grafham D.V."/>
            <person name="Griffiths C."/>
            <person name="Griffiths-Jones S."/>
            <person name="Grocock R."/>
            <person name="Hammond S."/>
            <person name="Harrison E.S.I."/>
            <person name="Hart E."/>
            <person name="Haugen E."/>
            <person name="Heath P.D."/>
            <person name="Holmes S."/>
            <person name="Holt K."/>
            <person name="Howden P.J."/>
            <person name="Hunt A.R."/>
            <person name="Hunt S.E."/>
            <person name="Hunter G."/>
            <person name="Isherwood J."/>
            <person name="James R."/>
            <person name="Johnson C."/>
            <person name="Johnson D."/>
            <person name="Joy A."/>
            <person name="Kay M."/>
            <person name="Kershaw J.K."/>
            <person name="Kibukawa M."/>
            <person name="Kimberley A.M."/>
            <person name="King A."/>
            <person name="Knights A.J."/>
            <person name="Lad H."/>
            <person name="Laird G."/>
            <person name="Lawlor S."/>
            <person name="Leongamornlert D.A."/>
            <person name="Lloyd D.M."/>
            <person name="Loveland J."/>
            <person name="Lovell J."/>
            <person name="Lush M.J."/>
            <person name="Lyne R."/>
            <person name="Martin S."/>
            <person name="Mashreghi-Mohammadi M."/>
            <person name="Matthews L."/>
            <person name="Matthews N.S.W."/>
            <person name="McLaren S."/>
            <person name="Milne S."/>
            <person name="Mistry S."/>
            <person name="Moore M.J.F."/>
            <person name="Nickerson T."/>
            <person name="O'Dell C.N."/>
            <person name="Oliver K."/>
            <person name="Palmeiri A."/>
            <person name="Palmer S.A."/>
            <person name="Parker A."/>
            <person name="Patel D."/>
            <person name="Pearce A.V."/>
            <person name="Peck A.I."/>
            <person name="Pelan S."/>
            <person name="Phelps K."/>
            <person name="Phillimore B.J."/>
            <person name="Plumb R."/>
            <person name="Rajan J."/>
            <person name="Raymond C."/>
            <person name="Rouse G."/>
            <person name="Saenphimmachak C."/>
            <person name="Sehra H.K."/>
            <person name="Sheridan E."/>
            <person name="Shownkeen R."/>
            <person name="Sims S."/>
            <person name="Skuce C.D."/>
            <person name="Smith M."/>
            <person name="Steward C."/>
            <person name="Subramanian S."/>
            <person name="Sycamore N."/>
            <person name="Tracey A."/>
            <person name="Tromans A."/>
            <person name="Van Helmond Z."/>
            <person name="Wall M."/>
            <person name="Wallis J.M."/>
            <person name="White S."/>
            <person name="Whitehead S.L."/>
            <person name="Wilkinson J.E."/>
            <person name="Willey D.L."/>
            <person name="Williams H."/>
            <person name="Wilming L."/>
            <person name="Wray P.W."/>
            <person name="Wu Z."/>
            <person name="Coulson A."/>
            <person name="Vaudin M."/>
            <person name="Sulston J.E."/>
            <person name="Durbin R.M."/>
            <person name="Hubbard T."/>
            <person name="Wooster R."/>
            <person name="Dunham I."/>
            <person name="Carter N.P."/>
            <person name="McVean G."/>
            <person name="Ross M.T."/>
            <person name="Harrow J."/>
            <person name="Olson M.V."/>
            <person name="Beck S."/>
            <person name="Rogers J."/>
            <person name="Bentley D.R."/>
        </authorList>
    </citation>
    <scope>NUCLEOTIDE SEQUENCE [LARGE SCALE GENOMIC DNA]</scope>
</reference>
<reference key="5">
    <citation type="journal article" date="2004" name="Genome Res.">
        <title>The status, quality, and expansion of the NIH full-length cDNA project: the Mammalian Gene Collection (MGC).</title>
        <authorList>
            <consortium name="The MGC Project Team"/>
        </authorList>
    </citation>
    <scope>NUCLEOTIDE SEQUENCE [LARGE SCALE MRNA] (ISOFORM 2)</scope>
</reference>
<reference key="6">
    <citation type="journal article" date="2004" name="Science">
        <title>Acidic mammalian chitinase in asthmatic Th2 inflammation and IL-13 pathway activation.</title>
        <authorList>
            <person name="Zhu Z."/>
            <person name="Zheng T."/>
            <person name="Homer R.J."/>
            <person name="Kim Y.K."/>
            <person name="Chen N.Y."/>
            <person name="Cohn L."/>
            <person name="Hamid Q."/>
            <person name="Elias J.A."/>
        </authorList>
    </citation>
    <scope>INDUCTION</scope>
    <scope>TISSUE SPECIFICITY</scope>
</reference>
<reference key="7">
    <citation type="journal article" date="2008" name="J. Biol. Chem.">
        <title>Acidic mammalian chitinase is secreted via an ADAM17/epidermal growth factor receptor-dependent pathway and stimulates chemokine production by pulmonary epithelial cells.</title>
        <authorList>
            <person name="Hartl D."/>
            <person name="He C.H."/>
            <person name="Koller B."/>
            <person name="Da Silva C.A."/>
            <person name="Homer R."/>
            <person name="Lee C.G."/>
            <person name="Elias J.A."/>
        </authorList>
    </citation>
    <scope>FUNCTION</scope>
    <scope>CATALYTIC ACTIVITY</scope>
    <scope>INTERACTION WITH EGFR</scope>
    <scope>SUBCELLULAR LOCATION</scope>
</reference>
<reference key="8">
    <citation type="journal article" date="2009" name="J. Immunol.">
        <title>Acidic mammalian chitinase regulates epithelial cell apoptosis via a chitinolytic-independent mechanism.</title>
        <authorList>
            <person name="Hartl D."/>
            <person name="He C.H."/>
            <person name="Koller B."/>
            <person name="Da Silva C.A."/>
            <person name="Kobayashi Y."/>
            <person name="Lee C.G."/>
            <person name="Flavell R.A."/>
            <person name="Elias J.A."/>
        </authorList>
    </citation>
    <scope>FUNCTION</scope>
    <scope>MUTAGENESIS OF ASP-138</scope>
</reference>
<reference key="9">
    <citation type="journal article" date="2009" name="Protein Sci.">
        <title>Triad of polar residues implicated in pH specificity of acidic mammalian chitinase.</title>
        <authorList>
            <person name="Olland A.M."/>
            <person name="Strand J."/>
            <person name="Presman E."/>
            <person name="Czerwinski R."/>
            <person name="Joseph-McCarthy D."/>
            <person name="Krykbaev R."/>
            <person name="Schlingmann G."/>
            <person name="Chopra R."/>
            <person name="Lin L."/>
            <person name="Fleming M."/>
            <person name="Kriz R."/>
            <person name="Stahl M."/>
            <person name="Somers W."/>
            <person name="Fitz L."/>
            <person name="Mosyak L."/>
        </authorList>
    </citation>
    <scope>X-RAY CRYSTALLOGRAPHY (1.7 ANGSTROMS) OF 22-408 IN COMPLEX WITH METHYLALLOSAMIDIN</scope>
    <scope>CATALYTIC ACTIVITY</scope>
    <scope>DISULFIDE BONDS</scope>
</reference>
<reference key="10">
    <citation type="journal article" date="2009" name="J. Biol. Chem.">
        <title>Differential enzymatic activity of common haplotypic versions of the human acidic mammalian chitinase protein.</title>
        <authorList>
            <person name="Seibold M.A."/>
            <person name="Reese T.A."/>
            <person name="Choudhry S."/>
            <person name="Salam M.T."/>
            <person name="Beckman K."/>
            <person name="Eng C."/>
            <person name="Atakilit A."/>
            <person name="Meade K."/>
            <person name="Lenoir M."/>
            <person name="Watson H.G."/>
            <person name="Thyne S."/>
            <person name="Kumar R."/>
            <person name="Weiss K.B."/>
            <person name="Grammer L.C."/>
            <person name="Avila P."/>
            <person name="Schleimer R.P."/>
            <person name="Fahy J.V."/>
            <person name="Rodriguez-Santana J."/>
            <person name="Rodriguez-Cintron W."/>
            <person name="Boot R.G."/>
            <person name="Sheppard D."/>
            <person name="Gilliland F.D."/>
            <person name="Locksley R.M."/>
            <person name="Burchard E.G."/>
        </authorList>
    </citation>
    <scope>VARIANTS ASP-45; ASN-47; MET-61; ARG-102; ARG-125; VAL-339; SER-354 AND GLY-432</scope>
    <scope>CATALYTIC ACTIVITY</scope>
    <scope>FUNCTION</scope>
    <scope>CHARACTERIZATION OF VARIANTS ASP-45; ASN-47 AND MET-61</scope>
</reference>
<comment type="function">
    <text evidence="5 7 9 10">Degrades chitin and chitotriose. May participate in the defense against nematodes, fungi and other pathogens. Plays a role in T-helper cell type 2 (Th2) immune response. Contributes to the response to IL-13 and inflammation in response to IL-13. Stimulates chemokine production by pulmonary epithelial cells. Protects lung epithelial cells against apoptosis and promotes phosphorylation of AKT1. Its function in the inflammatory response and in protecting cells against apoptosis is inhibited by allosamidin, suggesting that the function of this protein depends on carbohydrate binding.</text>
</comment>
<comment type="catalytic activity">
    <reaction evidence="7 8 10">
        <text>Random endo-hydrolysis of N-acetyl-beta-D-glucosaminide (1-&gt;4)-beta-linkages in chitin and chitodextrins.</text>
        <dbReference type="EC" id="3.2.1.14"/>
    </reaction>
</comment>
<comment type="subunit">
    <text evidence="7 8">Interacts with EGFR.</text>
</comment>
<comment type="interaction">
    <interactant intactId="EBI-14357960">
        <id>Q9BZP6</id>
    </interactant>
    <interactant intactId="EBI-2834035">
        <id>Q5RI15</id>
        <label>COX20</label>
    </interactant>
    <organismsDiffer>false</organismsDiffer>
    <experiments>3</experiments>
</comment>
<comment type="interaction">
    <interactant intactId="EBI-14357960">
        <id>Q9BZP6</id>
    </interactant>
    <interactant intactId="EBI-297353">
        <id>P00533</id>
        <label>EGFR</label>
    </interactant>
    <organismsDiffer>false</organismsDiffer>
    <experiments>2</experiments>
</comment>
<comment type="interaction">
    <interactant intactId="EBI-14357960">
        <id>Q9BZP6</id>
    </interactant>
    <interactant intactId="EBI-11322432">
        <id>Q8NC74</id>
        <label>RBBP8NL</label>
    </interactant>
    <organismsDiffer>false</organismsDiffer>
    <experiments>3</experiments>
</comment>
<comment type="interaction">
    <interactant intactId="EBI-14357960">
        <id>Q9BZP6</id>
    </interactant>
    <interactant intactId="EBI-742381">
        <id>Q92609</id>
        <label>TBC1D5</label>
    </interactant>
    <organismsDiffer>false</organismsDiffer>
    <experiments>3</experiments>
</comment>
<comment type="subcellular location">
    <molecule>Isoform 1</molecule>
    <subcellularLocation>
        <location>Secreted</location>
    </subcellularLocation>
    <text>Secretion depends on EGFR activity.</text>
</comment>
<comment type="subcellular location">
    <molecule>Isoform 2</molecule>
    <subcellularLocation>
        <location>Cytoplasm</location>
    </subcellularLocation>
</comment>
<comment type="subcellular location">
    <molecule>Isoform 3</molecule>
    <subcellularLocation>
        <location>Cytoplasm</location>
    </subcellularLocation>
</comment>
<comment type="alternative products">
    <event type="alternative splicing"/>
    <isoform>
        <id>Q9BZP6-1</id>
        <name>1</name>
        <sequence type="displayed"/>
    </isoform>
    <isoform>
        <id>Q9BZP6-2</id>
        <name>2</name>
        <name>TSA1902-L</name>
        <sequence type="described" ref="VSP_008635"/>
    </isoform>
    <isoform>
        <id>Q9BZP6-3</id>
        <name>3</name>
        <name>TSA1902-S</name>
        <sequence type="described" ref="VSP_008634"/>
    </isoform>
</comment>
<comment type="tissue specificity">
    <text evidence="5 6">Detected in lung epithelial cells from asthma patients (at protein level). Highly expressed in stomach. Detected at lower levels in lung.</text>
</comment>
<comment type="induction">
    <text evidence="6">Up-regulated in lung epithelial cells from asthma patients.</text>
</comment>
<comment type="similarity">
    <text evidence="14">Belongs to the glycosyl hydrolase 18 family. Chitinase class II subfamily.</text>
</comment>
<sequence length="476" mass="52271">MTKLILLTGLVLILNLQLGSAYQLTCYFTNWAQYRPGLGRFMPDNIDPCLCTHLIYAFAGRQNNEITTIEWNDVTLYQAFNGLKNKNSQLKTLLAIGGWNFGTAPFTAMVSTPENRQTFITSVIKFLRQYEFDGLDFDWEYPGSRGSPPQDKHLFTVLVQEMREAFEQEAKQINKPRLMVTAAVAAGISNIQSGYEIPQLSQYLDYIHVMTYDLHGSWEGYTGENSPLYKYPTDTGSNAYLNVDYVMNYWKDNGAPAEKLIVGFPTYGHNFILSNPSNTGIGAPTSGAGPAGPYAKESGIWAYYEICTFLKNGATQGWDAPQEVPYAYQGNVWVGYDNIKSFDIKAQWLKHNKFGGAMVWAIDLDDFTGTFCNQGKFPLISTLKKALGLQSASCTAPAQPIEPITAAPSGSGNGSGSSSSGGSSGGSGFCAVRANGLYPVANNRNAFWHCVNGVTYQQNCQAGLVFDTSCDCCNWA</sequence>
<name>CHIA_HUMAN</name>
<dbReference type="EC" id="3.2.1.14"/>
<dbReference type="EMBL" id="AB025008">
    <property type="protein sequence ID" value="BAA86980.1"/>
    <property type="molecule type" value="mRNA"/>
</dbReference>
<dbReference type="EMBL" id="AB025009">
    <property type="protein sequence ID" value="BAA86981.1"/>
    <property type="molecule type" value="mRNA"/>
</dbReference>
<dbReference type="EMBL" id="AF290004">
    <property type="protein sequence ID" value="AAG60019.1"/>
    <property type="molecule type" value="mRNA"/>
</dbReference>
<dbReference type="EMBL" id="AY789444">
    <property type="protein sequence ID" value="AAX81431.1"/>
    <property type="molecule type" value="mRNA"/>
</dbReference>
<dbReference type="EMBL" id="AY789445">
    <property type="protein sequence ID" value="AAX81432.1"/>
    <property type="molecule type" value="mRNA"/>
</dbReference>
<dbReference type="EMBL" id="AL513202">
    <property type="status" value="NOT_ANNOTATED_CDS"/>
    <property type="molecule type" value="Genomic_DNA"/>
</dbReference>
<dbReference type="EMBL" id="AL356387">
    <property type="status" value="NOT_ANNOTATED_CDS"/>
    <property type="molecule type" value="Genomic_DNA"/>
</dbReference>
<dbReference type="EMBL" id="BC047336">
    <property type="protein sequence ID" value="AAH47336.2"/>
    <property type="molecule type" value="mRNA"/>
</dbReference>
<dbReference type="EMBL" id="BC036339">
    <property type="protein sequence ID" value="AAH36339.2"/>
    <property type="molecule type" value="mRNA"/>
</dbReference>
<dbReference type="EMBL" id="BC106910">
    <property type="protein sequence ID" value="AAI06911.1"/>
    <property type="molecule type" value="mRNA"/>
</dbReference>
<dbReference type="CCDS" id="CCDS41368.1">
    <molecule id="Q9BZP6-1"/>
</dbReference>
<dbReference type="CCDS" id="CCDS58017.1">
    <molecule id="Q9BZP6-3"/>
</dbReference>
<dbReference type="CCDS" id="CCDS832.1">
    <molecule id="Q9BZP6-2"/>
</dbReference>
<dbReference type="RefSeq" id="NP_001035713.1">
    <molecule id="Q9BZP6-3"/>
    <property type="nucleotide sequence ID" value="NM_001040623.3"/>
</dbReference>
<dbReference type="RefSeq" id="NP_001244930.1">
    <molecule id="Q9BZP6-2"/>
    <property type="nucleotide sequence ID" value="NM_001258001.2"/>
</dbReference>
<dbReference type="RefSeq" id="NP_001244931.1">
    <molecule id="Q9BZP6-3"/>
    <property type="nucleotide sequence ID" value="NM_001258002.2"/>
</dbReference>
<dbReference type="RefSeq" id="NP_001244932.1">
    <molecule id="Q9BZP6-2"/>
    <property type="nucleotide sequence ID" value="NM_001258003.2"/>
</dbReference>
<dbReference type="RefSeq" id="NP_001244933.1">
    <molecule id="Q9BZP6-3"/>
    <property type="nucleotide sequence ID" value="NM_001258004.2"/>
</dbReference>
<dbReference type="RefSeq" id="NP_001244934.1">
    <molecule id="Q9BZP6-3"/>
    <property type="nucleotide sequence ID" value="NM_001258005.2"/>
</dbReference>
<dbReference type="RefSeq" id="NP_068569.2">
    <molecule id="Q9BZP6-2"/>
    <property type="nucleotide sequence ID" value="NM_021797.3"/>
</dbReference>
<dbReference type="RefSeq" id="NP_970615.2">
    <molecule id="Q9BZP6-1"/>
    <property type="nucleotide sequence ID" value="NM_201653.4"/>
</dbReference>
<dbReference type="RefSeq" id="XP_006710640.1">
    <property type="nucleotide sequence ID" value="XM_006710577.3"/>
</dbReference>
<dbReference type="RefSeq" id="XP_016856536.1">
    <molecule id="Q9BZP6-3"/>
    <property type="nucleotide sequence ID" value="XM_017001047.1"/>
</dbReference>
<dbReference type="RefSeq" id="XP_016856537.1">
    <property type="nucleotide sequence ID" value="XM_017001048.1"/>
</dbReference>
<dbReference type="PDB" id="2YBT">
    <property type="method" value="X-ray"/>
    <property type="resolution" value="2.22 A"/>
    <property type="chains" value="A/B/C/D/E/F=21-398"/>
</dbReference>
<dbReference type="PDB" id="2YBU">
    <property type="method" value="X-ray"/>
    <property type="resolution" value="2.25 A"/>
    <property type="chains" value="A/B/C/D/E/F=21-398"/>
</dbReference>
<dbReference type="PDB" id="3FXY">
    <property type="method" value="X-ray"/>
    <property type="resolution" value="2.00 A"/>
    <property type="chains" value="A/B/C/D=22-408"/>
</dbReference>
<dbReference type="PDB" id="3FY1">
    <property type="method" value="X-ray"/>
    <property type="resolution" value="1.70 A"/>
    <property type="chains" value="A/B=22-408"/>
</dbReference>
<dbReference type="PDB" id="3RM4">
    <property type="method" value="X-ray"/>
    <property type="resolution" value="1.90 A"/>
    <property type="chains" value="A/B=22-408"/>
</dbReference>
<dbReference type="PDB" id="3RM8">
    <property type="method" value="X-ray"/>
    <property type="resolution" value="1.80 A"/>
    <property type="chains" value="A/B=22-408"/>
</dbReference>
<dbReference type="PDB" id="3RM9">
    <property type="method" value="X-ray"/>
    <property type="resolution" value="2.10 A"/>
    <property type="chains" value="A/B=22-408"/>
</dbReference>
<dbReference type="PDB" id="3RME">
    <property type="method" value="X-ray"/>
    <property type="resolution" value="1.80 A"/>
    <property type="chains" value="A/B=22-408"/>
</dbReference>
<dbReference type="PDBsum" id="2YBT"/>
<dbReference type="PDBsum" id="2YBU"/>
<dbReference type="PDBsum" id="3FXY"/>
<dbReference type="PDBsum" id="3FY1"/>
<dbReference type="PDBsum" id="3RM4"/>
<dbReference type="PDBsum" id="3RM8"/>
<dbReference type="PDBsum" id="3RM9"/>
<dbReference type="PDBsum" id="3RME"/>
<dbReference type="SMR" id="Q9BZP6"/>
<dbReference type="BioGRID" id="118039">
    <property type="interactions" value="45"/>
</dbReference>
<dbReference type="FunCoup" id="Q9BZP6">
    <property type="interactions" value="68"/>
</dbReference>
<dbReference type="IntAct" id="Q9BZP6">
    <property type="interactions" value="31"/>
</dbReference>
<dbReference type="STRING" id="9606.ENSP00000358755"/>
<dbReference type="BindingDB" id="Q9BZP6"/>
<dbReference type="ChEMBL" id="CHEMBL1293197"/>
<dbReference type="GuidetoPHARMACOLOGY" id="2982"/>
<dbReference type="CAZy" id="CBM14">
    <property type="family name" value="Carbohydrate-Binding Module Family 14"/>
</dbReference>
<dbReference type="CAZy" id="GH18">
    <property type="family name" value="Glycoside Hydrolase Family 18"/>
</dbReference>
<dbReference type="iPTMnet" id="Q9BZP6"/>
<dbReference type="PhosphoSitePlus" id="Q9BZP6"/>
<dbReference type="BioMuta" id="CHIA"/>
<dbReference type="DMDM" id="37999771"/>
<dbReference type="MassIVE" id="Q9BZP6"/>
<dbReference type="PaxDb" id="9606-ENSP00000358755"/>
<dbReference type="PeptideAtlas" id="Q9BZP6"/>
<dbReference type="ProteomicsDB" id="79883">
    <molecule id="Q9BZP6-1"/>
</dbReference>
<dbReference type="ProteomicsDB" id="79884">
    <molecule id="Q9BZP6-2"/>
</dbReference>
<dbReference type="ProteomicsDB" id="79885">
    <molecule id="Q9BZP6-3"/>
</dbReference>
<dbReference type="ABCD" id="Q9BZP6">
    <property type="antibodies" value="4 sequenced antibodies"/>
</dbReference>
<dbReference type="Antibodypedia" id="33803">
    <property type="antibodies" value="254 antibodies from 25 providers"/>
</dbReference>
<dbReference type="DNASU" id="27159"/>
<dbReference type="Ensembl" id="ENST00000343320.10">
    <molecule id="Q9BZP6-1"/>
    <property type="protein sequence ID" value="ENSP00000341828.6"/>
    <property type="gene ID" value="ENSG00000134216.19"/>
</dbReference>
<dbReference type="Ensembl" id="ENST00000353665.10">
    <molecule id="Q9BZP6-3"/>
    <property type="protein sequence ID" value="ENSP00000338970.7"/>
    <property type="gene ID" value="ENSG00000134216.19"/>
</dbReference>
<dbReference type="Ensembl" id="ENST00000369740.6">
    <molecule id="Q9BZP6-1"/>
    <property type="protein sequence ID" value="ENSP00000358755.1"/>
    <property type="gene ID" value="ENSG00000134216.19"/>
</dbReference>
<dbReference type="Ensembl" id="ENST00000430615.1">
    <molecule id="Q9BZP6-2"/>
    <property type="protein sequence ID" value="ENSP00000391132.1"/>
    <property type="gene ID" value="ENSG00000134216.19"/>
</dbReference>
<dbReference type="Ensembl" id="ENST00000451398.6">
    <molecule id="Q9BZP6-3"/>
    <property type="protein sequence ID" value="ENSP00000390476.2"/>
    <property type="gene ID" value="ENSG00000134216.19"/>
</dbReference>
<dbReference type="Ensembl" id="ENST00000483391.5">
    <molecule id="Q9BZP6-3"/>
    <property type="protein sequence ID" value="ENSP00000436946.1"/>
    <property type="gene ID" value="ENSG00000134216.19"/>
</dbReference>
<dbReference type="GeneID" id="27159"/>
<dbReference type="KEGG" id="hsa:27159"/>
<dbReference type="MANE-Select" id="ENST00000369740.6">
    <property type="protein sequence ID" value="ENSP00000358755.1"/>
    <property type="RefSeq nucleotide sequence ID" value="NM_201653.4"/>
    <property type="RefSeq protein sequence ID" value="NP_970615.2"/>
</dbReference>
<dbReference type="UCSC" id="uc001eas.5">
    <molecule id="Q9BZP6-1"/>
    <property type="organism name" value="human"/>
</dbReference>
<dbReference type="AGR" id="HGNC:17432"/>
<dbReference type="CTD" id="27159"/>
<dbReference type="DisGeNET" id="27159"/>
<dbReference type="GeneCards" id="CHIA"/>
<dbReference type="HGNC" id="HGNC:17432">
    <property type="gene designation" value="CHIA"/>
</dbReference>
<dbReference type="HPA" id="ENSG00000134216">
    <property type="expression patterns" value="Tissue enriched (stomach)"/>
</dbReference>
<dbReference type="MIM" id="606080">
    <property type="type" value="gene"/>
</dbReference>
<dbReference type="neXtProt" id="NX_Q9BZP6"/>
<dbReference type="OpenTargets" id="ENSG00000134216"/>
<dbReference type="PharmGKB" id="PA142672117"/>
<dbReference type="VEuPathDB" id="HostDB:ENSG00000134216"/>
<dbReference type="eggNOG" id="KOG2806">
    <property type="taxonomic scope" value="Eukaryota"/>
</dbReference>
<dbReference type="GeneTree" id="ENSGT00940000154557"/>
<dbReference type="HOGENOM" id="CLU_002833_3_1_1"/>
<dbReference type="InParanoid" id="Q9BZP6"/>
<dbReference type="OMA" id="SYPESKY"/>
<dbReference type="OrthoDB" id="76388at2759"/>
<dbReference type="PAN-GO" id="Q9BZP6">
    <property type="GO annotations" value="4 GO annotations based on evolutionary models"/>
</dbReference>
<dbReference type="PhylomeDB" id="Q9BZP6"/>
<dbReference type="TreeFam" id="TF315610"/>
<dbReference type="BRENDA" id="3.2.1.14">
    <property type="organism ID" value="2681"/>
</dbReference>
<dbReference type="PathwayCommons" id="Q9BZP6"/>
<dbReference type="Reactome" id="R-HSA-189085">
    <property type="pathway name" value="Digestion of dietary carbohydrate"/>
</dbReference>
<dbReference type="SignaLink" id="Q9BZP6"/>
<dbReference type="BioGRID-ORCS" id="27159">
    <property type="hits" value="7 hits in 1148 CRISPR screens"/>
</dbReference>
<dbReference type="EvolutionaryTrace" id="Q9BZP6"/>
<dbReference type="GenomeRNAi" id="27159"/>
<dbReference type="Pharos" id="Q9BZP6">
    <property type="development level" value="Tchem"/>
</dbReference>
<dbReference type="PRO" id="PR:Q9BZP6"/>
<dbReference type="Proteomes" id="UP000005640">
    <property type="component" value="Chromosome 1"/>
</dbReference>
<dbReference type="RNAct" id="Q9BZP6">
    <property type="molecule type" value="protein"/>
</dbReference>
<dbReference type="Bgee" id="ENSG00000134216">
    <property type="expression patterns" value="Expressed in cardia of stomach and 98 other cell types or tissues"/>
</dbReference>
<dbReference type="ExpressionAtlas" id="Q9BZP6">
    <property type="expression patterns" value="baseline and differential"/>
</dbReference>
<dbReference type="GO" id="GO:0005737">
    <property type="term" value="C:cytoplasm"/>
    <property type="evidence" value="ECO:0000250"/>
    <property type="project" value="UniProtKB"/>
</dbReference>
<dbReference type="GO" id="GO:0005576">
    <property type="term" value="C:extracellular region"/>
    <property type="evidence" value="ECO:0000318"/>
    <property type="project" value="GO_Central"/>
</dbReference>
<dbReference type="GO" id="GO:0005615">
    <property type="term" value="C:extracellular space"/>
    <property type="evidence" value="ECO:0000314"/>
    <property type="project" value="UniProtKB"/>
</dbReference>
<dbReference type="GO" id="GO:0008061">
    <property type="term" value="F:chitin binding"/>
    <property type="evidence" value="ECO:0007669"/>
    <property type="project" value="UniProtKB-KW"/>
</dbReference>
<dbReference type="GO" id="GO:0004568">
    <property type="term" value="F:chitinase activity"/>
    <property type="evidence" value="ECO:0000314"/>
    <property type="project" value="UniProtKB"/>
</dbReference>
<dbReference type="GO" id="GO:0008843">
    <property type="term" value="F:endochitinase activity"/>
    <property type="evidence" value="ECO:0007669"/>
    <property type="project" value="UniProtKB-EC"/>
</dbReference>
<dbReference type="GO" id="GO:0019900">
    <property type="term" value="F:kinase binding"/>
    <property type="evidence" value="ECO:0000353"/>
    <property type="project" value="UniProtKB"/>
</dbReference>
<dbReference type="GO" id="GO:0006915">
    <property type="term" value="P:apoptotic process"/>
    <property type="evidence" value="ECO:0007669"/>
    <property type="project" value="UniProtKB-KW"/>
</dbReference>
<dbReference type="GO" id="GO:0006032">
    <property type="term" value="P:chitin catabolic process"/>
    <property type="evidence" value="ECO:0000314"/>
    <property type="project" value="UniProtKB"/>
</dbReference>
<dbReference type="GO" id="GO:0006030">
    <property type="term" value="P:chitin metabolic process"/>
    <property type="evidence" value="ECO:0000303"/>
    <property type="project" value="UniProtKB"/>
</dbReference>
<dbReference type="GO" id="GO:0002376">
    <property type="term" value="P:immune system process"/>
    <property type="evidence" value="ECO:0007669"/>
    <property type="project" value="UniProtKB-KW"/>
</dbReference>
<dbReference type="GO" id="GO:0000272">
    <property type="term" value="P:polysaccharide catabolic process"/>
    <property type="evidence" value="ECO:0007669"/>
    <property type="project" value="UniProtKB-KW"/>
</dbReference>
<dbReference type="GO" id="GO:0044245">
    <property type="term" value="P:polysaccharide digestion"/>
    <property type="evidence" value="ECO:0000304"/>
    <property type="project" value="Reactome"/>
</dbReference>
<dbReference type="GO" id="GO:0032722">
    <property type="term" value="P:positive regulation of chemokine production"/>
    <property type="evidence" value="ECO:0000314"/>
    <property type="project" value="UniProtKB"/>
</dbReference>
<dbReference type="GO" id="GO:0002532">
    <property type="term" value="P:production of molecular mediator involved in inflammatory response"/>
    <property type="evidence" value="ECO:0000314"/>
    <property type="project" value="UniProtKB"/>
</dbReference>
<dbReference type="CDD" id="cd02872">
    <property type="entry name" value="GH18_chitolectin_chitotriosidase"/>
    <property type="match status" value="1"/>
</dbReference>
<dbReference type="FunFam" id="2.170.140.10:FF:000001">
    <property type="entry name" value="Acidic mammalian chitinase"/>
    <property type="match status" value="1"/>
</dbReference>
<dbReference type="FunFam" id="3.20.20.80:FF:000007">
    <property type="entry name" value="Acidic mammalian chitinase"/>
    <property type="match status" value="1"/>
</dbReference>
<dbReference type="FunFam" id="3.20.20.80:FF:000081">
    <property type="entry name" value="Chitinase 1"/>
    <property type="match status" value="1"/>
</dbReference>
<dbReference type="FunFam" id="3.10.50.10:FF:000001">
    <property type="entry name" value="Chitinase 3-like 1"/>
    <property type="match status" value="1"/>
</dbReference>
<dbReference type="Gene3D" id="3.10.50.10">
    <property type="match status" value="1"/>
</dbReference>
<dbReference type="Gene3D" id="2.170.140.10">
    <property type="entry name" value="Chitin binding domain"/>
    <property type="match status" value="1"/>
</dbReference>
<dbReference type="Gene3D" id="3.20.20.80">
    <property type="entry name" value="Glycosidases"/>
    <property type="match status" value="1"/>
</dbReference>
<dbReference type="InterPro" id="IPR002557">
    <property type="entry name" value="Chitin-bd_dom"/>
</dbReference>
<dbReference type="InterPro" id="IPR036508">
    <property type="entry name" value="Chitin-bd_dom_sf"/>
</dbReference>
<dbReference type="InterPro" id="IPR011583">
    <property type="entry name" value="Chitinase_II/V-like_cat"/>
</dbReference>
<dbReference type="InterPro" id="IPR029070">
    <property type="entry name" value="Chitinase_insertion_sf"/>
</dbReference>
<dbReference type="InterPro" id="IPR001223">
    <property type="entry name" value="Glyco_hydro18_cat"/>
</dbReference>
<dbReference type="InterPro" id="IPR001579">
    <property type="entry name" value="Glyco_hydro_18_chit_AS"/>
</dbReference>
<dbReference type="InterPro" id="IPR017853">
    <property type="entry name" value="Glycoside_hydrolase_SF"/>
</dbReference>
<dbReference type="InterPro" id="IPR050314">
    <property type="entry name" value="Glycosyl_Hydrlase_18"/>
</dbReference>
<dbReference type="PANTHER" id="PTHR11177:SF188">
    <property type="entry name" value="ACIDIC MAMMALIAN CHITINASE"/>
    <property type="match status" value="1"/>
</dbReference>
<dbReference type="PANTHER" id="PTHR11177">
    <property type="entry name" value="CHITINASE"/>
    <property type="match status" value="1"/>
</dbReference>
<dbReference type="Pfam" id="PF01607">
    <property type="entry name" value="CBM_14"/>
    <property type="match status" value="1"/>
</dbReference>
<dbReference type="Pfam" id="PF00704">
    <property type="entry name" value="Glyco_hydro_18"/>
    <property type="match status" value="1"/>
</dbReference>
<dbReference type="SMART" id="SM00494">
    <property type="entry name" value="ChtBD2"/>
    <property type="match status" value="1"/>
</dbReference>
<dbReference type="SMART" id="SM00636">
    <property type="entry name" value="Glyco_18"/>
    <property type="match status" value="1"/>
</dbReference>
<dbReference type="SUPFAM" id="SSF51445">
    <property type="entry name" value="(Trans)glycosidases"/>
    <property type="match status" value="1"/>
</dbReference>
<dbReference type="SUPFAM" id="SSF54556">
    <property type="entry name" value="Chitinase insertion domain"/>
    <property type="match status" value="1"/>
</dbReference>
<dbReference type="SUPFAM" id="SSF57625">
    <property type="entry name" value="Invertebrate chitin-binding proteins"/>
    <property type="match status" value="1"/>
</dbReference>
<dbReference type="PROSITE" id="PS50940">
    <property type="entry name" value="CHIT_BIND_II"/>
    <property type="match status" value="1"/>
</dbReference>
<dbReference type="PROSITE" id="PS01095">
    <property type="entry name" value="GH18_1"/>
    <property type="match status" value="1"/>
</dbReference>
<dbReference type="PROSITE" id="PS51910">
    <property type="entry name" value="GH18_2"/>
    <property type="match status" value="1"/>
</dbReference>
<accession>Q9BZP6</accession>
<accession>Q32W79</accession>
<accession>Q32W80</accession>
<accession>Q3B866</accession>
<accession>Q5U5Z5</accession>
<accession>Q5VUV4</accession>
<accession>Q86UD8</accession>
<accession>Q9ULY3</accession>
<accession>Q9ULY4</accession>
<proteinExistence type="evidence at protein level"/>
<gene>
    <name type="primary">CHIA</name>
</gene>